<feature type="chain" id="PRO_1000126034" description="DNA replication terminus site-binding protein">
    <location>
        <begin position="1"/>
        <end position="309"/>
    </location>
</feature>
<accession>B7M9W3</accession>
<proteinExistence type="inferred from homology"/>
<evidence type="ECO:0000255" key="1">
    <source>
        <dbReference type="HAMAP-Rule" id="MF_00483"/>
    </source>
</evidence>
<dbReference type="EMBL" id="CU928161">
    <property type="protein sequence ID" value="CAR02970.1"/>
    <property type="molecule type" value="Genomic_DNA"/>
</dbReference>
<dbReference type="RefSeq" id="WP_001332131.1">
    <property type="nucleotide sequence ID" value="NC_011742.1"/>
</dbReference>
<dbReference type="SMR" id="B7M9W3"/>
<dbReference type="KEGG" id="ecz:ECS88_1656"/>
<dbReference type="HOGENOM" id="CLU_078181_0_0_6"/>
<dbReference type="Proteomes" id="UP000000747">
    <property type="component" value="Chromosome"/>
</dbReference>
<dbReference type="GO" id="GO:0005737">
    <property type="term" value="C:cytoplasm"/>
    <property type="evidence" value="ECO:0007669"/>
    <property type="project" value="UniProtKB-SubCell"/>
</dbReference>
<dbReference type="GO" id="GO:0003677">
    <property type="term" value="F:DNA binding"/>
    <property type="evidence" value="ECO:0007669"/>
    <property type="project" value="UniProtKB-UniRule"/>
</dbReference>
<dbReference type="GO" id="GO:0006274">
    <property type="term" value="P:DNA replication termination"/>
    <property type="evidence" value="ECO:0007669"/>
    <property type="project" value="UniProtKB-UniRule"/>
</dbReference>
<dbReference type="Gene3D" id="3.30.54.10">
    <property type="match status" value="1"/>
</dbReference>
<dbReference type="Gene3D" id="3.50.14.10">
    <property type="entry name" value="Replication terminator Tus, domain 1 superfamily/Replication terminator Tus"/>
    <property type="match status" value="1"/>
</dbReference>
<dbReference type="HAMAP" id="MF_00483">
    <property type="entry name" value="Rep_term_Tus"/>
    <property type="match status" value="1"/>
</dbReference>
<dbReference type="InterPro" id="IPR008865">
    <property type="entry name" value="DNA_replication_term_site-bd"/>
</dbReference>
<dbReference type="InterPro" id="IPR036381">
    <property type="entry name" value="Tus_dom1"/>
</dbReference>
<dbReference type="InterPro" id="IPR036384">
    <property type="entry name" value="Tus_sf"/>
</dbReference>
<dbReference type="NCBIfam" id="TIGR02648">
    <property type="entry name" value="rep_term_tus"/>
    <property type="match status" value="1"/>
</dbReference>
<dbReference type="Pfam" id="PF05472">
    <property type="entry name" value="Ter"/>
    <property type="match status" value="1"/>
</dbReference>
<dbReference type="SUPFAM" id="SSF56596">
    <property type="entry name" value="Replication terminator protein (Tus)"/>
    <property type="match status" value="1"/>
</dbReference>
<protein>
    <recommendedName>
        <fullName evidence="1">DNA replication terminus site-binding protein</fullName>
        <shortName evidence="1">Ter-binding protein</shortName>
    </recommendedName>
</protein>
<keyword id="KW-0963">Cytoplasm</keyword>
<keyword id="KW-0235">DNA replication</keyword>
<keyword id="KW-0238">DNA-binding</keyword>
<keyword id="KW-1185">Reference proteome</keyword>
<comment type="function">
    <text evidence="1">Trans-acting protein required for termination of DNA replication. Binds to DNA replication terminator sequences (terA to terF) to prevent the passage of replication forks. The termination efficiency will be affected by the affinity of this protein for the terminator sequence.</text>
</comment>
<comment type="subcellular location">
    <subcellularLocation>
        <location evidence="1">Cytoplasm</location>
    </subcellularLocation>
</comment>
<comment type="similarity">
    <text evidence="1">Belongs to the Tus family.</text>
</comment>
<gene>
    <name evidence="1" type="primary">tus</name>
    <name type="ordered locus">ECS88_1656</name>
</gene>
<sequence>MARYDLVDRLNTTFRQMEQELAAFAAHLEQHKLLVARVFSLPEVKKEDEHNPLNRIEVKQHLGNDAQSLALRHFRHLFIQQQSENRSSKAAVRLPGVLCYQVDNFSQAALVSHIQHINKLKTTFEHIVTVESELPSAARFEWVHRHLPGLITLNAYRTLTVLHDPATLRFGWANKHIIKNLHRDEVLAQLEKSLKSPRSVAPWTREEWQRKLEREYQDIAALPQNAKLKIKRPVKVQPIARVWYKGDQKQVQHACPTPLIALINRDNGAGVPDVGELLNYDADNVQHRYKPQAQPLRLIIPRLHLYVAD</sequence>
<name>TUS_ECO45</name>
<reference key="1">
    <citation type="journal article" date="2009" name="PLoS Genet.">
        <title>Organised genome dynamics in the Escherichia coli species results in highly diverse adaptive paths.</title>
        <authorList>
            <person name="Touchon M."/>
            <person name="Hoede C."/>
            <person name="Tenaillon O."/>
            <person name="Barbe V."/>
            <person name="Baeriswyl S."/>
            <person name="Bidet P."/>
            <person name="Bingen E."/>
            <person name="Bonacorsi S."/>
            <person name="Bouchier C."/>
            <person name="Bouvet O."/>
            <person name="Calteau A."/>
            <person name="Chiapello H."/>
            <person name="Clermont O."/>
            <person name="Cruveiller S."/>
            <person name="Danchin A."/>
            <person name="Diard M."/>
            <person name="Dossat C."/>
            <person name="Karoui M.E."/>
            <person name="Frapy E."/>
            <person name="Garry L."/>
            <person name="Ghigo J.M."/>
            <person name="Gilles A.M."/>
            <person name="Johnson J."/>
            <person name="Le Bouguenec C."/>
            <person name="Lescat M."/>
            <person name="Mangenot S."/>
            <person name="Martinez-Jehanne V."/>
            <person name="Matic I."/>
            <person name="Nassif X."/>
            <person name="Oztas S."/>
            <person name="Petit M.A."/>
            <person name="Pichon C."/>
            <person name="Rouy Z."/>
            <person name="Ruf C.S."/>
            <person name="Schneider D."/>
            <person name="Tourret J."/>
            <person name="Vacherie B."/>
            <person name="Vallenet D."/>
            <person name="Medigue C."/>
            <person name="Rocha E.P.C."/>
            <person name="Denamur E."/>
        </authorList>
    </citation>
    <scope>NUCLEOTIDE SEQUENCE [LARGE SCALE GENOMIC DNA]</scope>
    <source>
        <strain>S88 / ExPEC</strain>
    </source>
</reference>
<organism>
    <name type="scientific">Escherichia coli O45:K1 (strain S88 / ExPEC)</name>
    <dbReference type="NCBI Taxonomy" id="585035"/>
    <lineage>
        <taxon>Bacteria</taxon>
        <taxon>Pseudomonadati</taxon>
        <taxon>Pseudomonadota</taxon>
        <taxon>Gammaproteobacteria</taxon>
        <taxon>Enterobacterales</taxon>
        <taxon>Enterobacteriaceae</taxon>
        <taxon>Escherichia</taxon>
    </lineage>
</organism>